<dbReference type="EMBL" id="X92475">
    <property type="protein sequence ID" value="CAA63213.1"/>
    <property type="molecule type" value="mRNA"/>
</dbReference>
<dbReference type="EMBL" id="AK314938">
    <property type="protein sequence ID" value="BAG37444.1"/>
    <property type="molecule type" value="mRNA"/>
</dbReference>
<dbReference type="EMBL" id="CH471172">
    <property type="protein sequence ID" value="EAW72766.1"/>
    <property type="molecule type" value="Genomic_DNA"/>
</dbReference>
<dbReference type="EMBL" id="BC008203">
    <property type="protein sequence ID" value="AAH08203.1"/>
    <property type="molecule type" value="mRNA"/>
</dbReference>
<dbReference type="EMBL" id="BC017026">
    <property type="protein sequence ID" value="AAH17026.1"/>
    <property type="molecule type" value="mRNA"/>
</dbReference>
<dbReference type="EMBL" id="CR457047">
    <property type="protein sequence ID" value="CAG33328.1"/>
    <property type="molecule type" value="mRNA"/>
</dbReference>
<dbReference type="CCDS" id="CCDS14739.1"/>
<dbReference type="RefSeq" id="NP_003483.1">
    <property type="nucleotide sequence ID" value="NM_003492.3"/>
</dbReference>
<dbReference type="RefSeq" id="XP_011529501.1">
    <property type="nucleotide sequence ID" value="XM_011531199.2"/>
</dbReference>
<dbReference type="RefSeq" id="XP_054183919.1">
    <property type="nucleotide sequence ID" value="XM_054327944.1"/>
</dbReference>
<dbReference type="BioGRID" id="113887">
    <property type="interactions" value="16"/>
</dbReference>
<dbReference type="FunCoup" id="Q14656">
    <property type="interactions" value="99"/>
</dbReference>
<dbReference type="IntAct" id="Q14656">
    <property type="interactions" value="16"/>
</dbReference>
<dbReference type="MINT" id="Q14656"/>
<dbReference type="STRING" id="9606.ENSP00000358999"/>
<dbReference type="TCDB" id="9.B.360.1.1">
    <property type="family name" value="the autism-related tmem187 (tmem187) family"/>
</dbReference>
<dbReference type="BioMuta" id="TMEM187"/>
<dbReference type="DMDM" id="2498474"/>
<dbReference type="MassIVE" id="Q14656"/>
<dbReference type="PaxDb" id="9606-ENSP00000358999"/>
<dbReference type="PeptideAtlas" id="Q14656"/>
<dbReference type="Antibodypedia" id="31098">
    <property type="antibodies" value="26 antibodies from 11 providers"/>
</dbReference>
<dbReference type="DNASU" id="8269"/>
<dbReference type="Ensembl" id="ENST00000369982.5">
    <property type="protein sequence ID" value="ENSP00000358999.4"/>
    <property type="gene ID" value="ENSG00000177854.8"/>
</dbReference>
<dbReference type="GeneID" id="8269"/>
<dbReference type="KEGG" id="hsa:8269"/>
<dbReference type="MANE-Select" id="ENST00000369982.5">
    <property type="protein sequence ID" value="ENSP00000358999.4"/>
    <property type="RefSeq nucleotide sequence ID" value="NM_003492.3"/>
    <property type="RefSeq protein sequence ID" value="NP_003483.1"/>
</dbReference>
<dbReference type="UCSC" id="uc004fjq.3">
    <property type="organism name" value="human"/>
</dbReference>
<dbReference type="AGR" id="HGNC:13705"/>
<dbReference type="CTD" id="8269"/>
<dbReference type="DisGeNET" id="8269"/>
<dbReference type="GeneCards" id="TMEM187"/>
<dbReference type="HGNC" id="HGNC:13705">
    <property type="gene designation" value="TMEM187"/>
</dbReference>
<dbReference type="HPA" id="ENSG00000177854">
    <property type="expression patterns" value="Low tissue specificity"/>
</dbReference>
<dbReference type="MalaCards" id="TMEM187"/>
<dbReference type="MIM" id="300059">
    <property type="type" value="gene"/>
</dbReference>
<dbReference type="neXtProt" id="NX_Q14656"/>
<dbReference type="OpenTargets" id="ENSG00000177854"/>
<dbReference type="PharmGKB" id="PA162406199"/>
<dbReference type="VEuPathDB" id="HostDB:ENSG00000177854"/>
<dbReference type="eggNOG" id="ENOG502QUS7">
    <property type="taxonomic scope" value="Eukaryota"/>
</dbReference>
<dbReference type="GeneTree" id="ENSGT00390000011272"/>
<dbReference type="HOGENOM" id="CLU_093204_0_0_1"/>
<dbReference type="InParanoid" id="Q14656"/>
<dbReference type="OMA" id="FLAMPCN"/>
<dbReference type="OrthoDB" id="5973769at2759"/>
<dbReference type="PAN-GO" id="Q14656">
    <property type="GO annotations" value="1 GO annotation based on evolutionary models"/>
</dbReference>
<dbReference type="PhylomeDB" id="Q14656"/>
<dbReference type="TreeFam" id="TF353833"/>
<dbReference type="PathwayCommons" id="Q14656"/>
<dbReference type="SignaLink" id="Q14656"/>
<dbReference type="BioGRID-ORCS" id="8269">
    <property type="hits" value="8 hits in 781 CRISPR screens"/>
</dbReference>
<dbReference type="ChiTaRS" id="TMEM187">
    <property type="organism name" value="human"/>
</dbReference>
<dbReference type="GenomeRNAi" id="8269"/>
<dbReference type="Pharos" id="Q14656">
    <property type="development level" value="Tdark"/>
</dbReference>
<dbReference type="PRO" id="PR:Q14656"/>
<dbReference type="Proteomes" id="UP000005640">
    <property type="component" value="Chromosome X"/>
</dbReference>
<dbReference type="RNAct" id="Q14656">
    <property type="molecule type" value="protein"/>
</dbReference>
<dbReference type="Bgee" id="ENSG00000177854">
    <property type="expression patterns" value="Expressed in endometrium epithelium and 166 other cell types or tissues"/>
</dbReference>
<dbReference type="ExpressionAtlas" id="Q14656">
    <property type="expression patterns" value="baseline and differential"/>
</dbReference>
<dbReference type="GO" id="GO:0016020">
    <property type="term" value="C:membrane"/>
    <property type="evidence" value="ECO:0007669"/>
    <property type="project" value="UniProtKB-SubCell"/>
</dbReference>
<dbReference type="GO" id="GO:0030133">
    <property type="term" value="C:transport vesicle"/>
    <property type="evidence" value="ECO:0000314"/>
    <property type="project" value="LIFEdb"/>
</dbReference>
<dbReference type="InterPro" id="IPR028066">
    <property type="entry name" value="TMEM187"/>
</dbReference>
<dbReference type="PANTHER" id="PTHR15066">
    <property type="entry name" value="TRANSMEMBRANE PROTEIN 187"/>
    <property type="match status" value="1"/>
</dbReference>
<dbReference type="PANTHER" id="PTHR15066:SF0">
    <property type="entry name" value="TRANSMEMBRANE PROTEIN 187"/>
    <property type="match status" value="1"/>
</dbReference>
<dbReference type="Pfam" id="PF15100">
    <property type="entry name" value="TMEM187"/>
    <property type="match status" value="1"/>
</dbReference>
<protein>
    <recommendedName>
        <fullName>Transmembrane protein 187</fullName>
    </recommendedName>
    <alternativeName>
        <fullName>Protein ITBA1</fullName>
    </alternativeName>
</protein>
<proteinExistence type="evidence at protein level"/>
<name>TM187_HUMAN</name>
<organism>
    <name type="scientific">Homo sapiens</name>
    <name type="common">Human</name>
    <dbReference type="NCBI Taxonomy" id="9606"/>
    <lineage>
        <taxon>Eukaryota</taxon>
        <taxon>Metazoa</taxon>
        <taxon>Chordata</taxon>
        <taxon>Craniata</taxon>
        <taxon>Vertebrata</taxon>
        <taxon>Euteleostomi</taxon>
        <taxon>Mammalia</taxon>
        <taxon>Eutheria</taxon>
        <taxon>Euarchontoglires</taxon>
        <taxon>Primates</taxon>
        <taxon>Haplorrhini</taxon>
        <taxon>Catarrhini</taxon>
        <taxon>Hominidae</taxon>
        <taxon>Homo</taxon>
    </lineage>
</organism>
<accession>Q14656</accession>
<accession>B2RC47</accession>
<accession>Q6IAV7</accession>
<keyword id="KW-0472">Membrane</keyword>
<keyword id="KW-1267">Proteomics identification</keyword>
<keyword id="KW-1185">Reference proteome</keyword>
<keyword id="KW-0812">Transmembrane</keyword>
<keyword id="KW-1133">Transmembrane helix</keyword>
<sequence length="261" mass="29148">MNPEWGQAFVHVAVAGGLCAVAVFTGIFDSVSVQVGYEHYAEAPVAGLPAFLAMPFNSLVNMAYTLLGLSWLHRGGAMGLGPRYLKDVFAAMALLYGPVQWLRLWTQWRRAAVLDQWLTLPIFAWPVAWCLYLDRGWRPWLFLSLECVSLASYGLALLHPQGFEVALGAHVVAAVGQALRTHRHYGSTTSATYLALGVLSCLGFVVLKLCDHQLARWRLFQCLTGHFWSKVCDVLQFHFAFLFLTHFNTHPRFHPSGGKTR</sequence>
<reference key="1">
    <citation type="journal article" date="1996" name="Genomics">
        <title>Characterization and fine localization of two new genes in Xq28 using the genomic sequence/EST database screening approach.</title>
        <authorList>
            <person name="Faranda S."/>
            <person name="Frattini A."/>
            <person name="Zucchi I."/>
            <person name="Patrosso C."/>
            <person name="Milanesi L."/>
            <person name="Montagna C."/>
            <person name="Vezzoni P."/>
        </authorList>
    </citation>
    <scope>NUCLEOTIDE SEQUENCE [MRNA]</scope>
    <source>
        <tissue>Skeletal muscle</tissue>
    </source>
</reference>
<reference key="2">
    <citation type="submission" date="2004-06" db="EMBL/GenBank/DDBJ databases">
        <title>Cloning of human full open reading frames in Gateway(TM) system entry vector (pDONR201).</title>
        <authorList>
            <person name="Ebert L."/>
            <person name="Schick M."/>
            <person name="Neubert P."/>
            <person name="Schatten R."/>
            <person name="Henze S."/>
            <person name="Korn B."/>
        </authorList>
    </citation>
    <scope>NUCLEOTIDE SEQUENCE [LARGE SCALE MRNA]</scope>
</reference>
<reference key="3">
    <citation type="journal article" date="2004" name="Nat. Genet.">
        <title>Complete sequencing and characterization of 21,243 full-length human cDNAs.</title>
        <authorList>
            <person name="Ota T."/>
            <person name="Suzuki Y."/>
            <person name="Nishikawa T."/>
            <person name="Otsuki T."/>
            <person name="Sugiyama T."/>
            <person name="Irie R."/>
            <person name="Wakamatsu A."/>
            <person name="Hayashi K."/>
            <person name="Sato H."/>
            <person name="Nagai K."/>
            <person name="Kimura K."/>
            <person name="Makita H."/>
            <person name="Sekine M."/>
            <person name="Obayashi M."/>
            <person name="Nishi T."/>
            <person name="Shibahara T."/>
            <person name="Tanaka T."/>
            <person name="Ishii S."/>
            <person name="Yamamoto J."/>
            <person name="Saito K."/>
            <person name="Kawai Y."/>
            <person name="Isono Y."/>
            <person name="Nakamura Y."/>
            <person name="Nagahari K."/>
            <person name="Murakami K."/>
            <person name="Yasuda T."/>
            <person name="Iwayanagi T."/>
            <person name="Wagatsuma M."/>
            <person name="Shiratori A."/>
            <person name="Sudo H."/>
            <person name="Hosoiri T."/>
            <person name="Kaku Y."/>
            <person name="Kodaira H."/>
            <person name="Kondo H."/>
            <person name="Sugawara M."/>
            <person name="Takahashi M."/>
            <person name="Kanda K."/>
            <person name="Yokoi T."/>
            <person name="Furuya T."/>
            <person name="Kikkawa E."/>
            <person name="Omura Y."/>
            <person name="Abe K."/>
            <person name="Kamihara K."/>
            <person name="Katsuta N."/>
            <person name="Sato K."/>
            <person name="Tanikawa M."/>
            <person name="Yamazaki M."/>
            <person name="Ninomiya K."/>
            <person name="Ishibashi T."/>
            <person name="Yamashita H."/>
            <person name="Murakawa K."/>
            <person name="Fujimori K."/>
            <person name="Tanai H."/>
            <person name="Kimata M."/>
            <person name="Watanabe M."/>
            <person name="Hiraoka S."/>
            <person name="Chiba Y."/>
            <person name="Ishida S."/>
            <person name="Ono Y."/>
            <person name="Takiguchi S."/>
            <person name="Watanabe S."/>
            <person name="Yosida M."/>
            <person name="Hotuta T."/>
            <person name="Kusano J."/>
            <person name="Kanehori K."/>
            <person name="Takahashi-Fujii A."/>
            <person name="Hara H."/>
            <person name="Tanase T.-O."/>
            <person name="Nomura Y."/>
            <person name="Togiya S."/>
            <person name="Komai F."/>
            <person name="Hara R."/>
            <person name="Takeuchi K."/>
            <person name="Arita M."/>
            <person name="Imose N."/>
            <person name="Musashino K."/>
            <person name="Yuuki H."/>
            <person name="Oshima A."/>
            <person name="Sasaki N."/>
            <person name="Aotsuka S."/>
            <person name="Yoshikawa Y."/>
            <person name="Matsunawa H."/>
            <person name="Ichihara T."/>
            <person name="Shiohata N."/>
            <person name="Sano S."/>
            <person name="Moriya S."/>
            <person name="Momiyama H."/>
            <person name="Satoh N."/>
            <person name="Takami S."/>
            <person name="Terashima Y."/>
            <person name="Suzuki O."/>
            <person name="Nakagawa S."/>
            <person name="Senoh A."/>
            <person name="Mizoguchi H."/>
            <person name="Goto Y."/>
            <person name="Shimizu F."/>
            <person name="Wakebe H."/>
            <person name="Hishigaki H."/>
            <person name="Watanabe T."/>
            <person name="Sugiyama A."/>
            <person name="Takemoto M."/>
            <person name="Kawakami B."/>
            <person name="Yamazaki M."/>
            <person name="Watanabe K."/>
            <person name="Kumagai A."/>
            <person name="Itakura S."/>
            <person name="Fukuzumi Y."/>
            <person name="Fujimori Y."/>
            <person name="Komiyama M."/>
            <person name="Tashiro H."/>
            <person name="Tanigami A."/>
            <person name="Fujiwara T."/>
            <person name="Ono T."/>
            <person name="Yamada K."/>
            <person name="Fujii Y."/>
            <person name="Ozaki K."/>
            <person name="Hirao M."/>
            <person name="Ohmori Y."/>
            <person name="Kawabata A."/>
            <person name="Hikiji T."/>
            <person name="Kobatake N."/>
            <person name="Inagaki H."/>
            <person name="Ikema Y."/>
            <person name="Okamoto S."/>
            <person name="Okitani R."/>
            <person name="Kawakami T."/>
            <person name="Noguchi S."/>
            <person name="Itoh T."/>
            <person name="Shigeta K."/>
            <person name="Senba T."/>
            <person name="Matsumura K."/>
            <person name="Nakajima Y."/>
            <person name="Mizuno T."/>
            <person name="Morinaga M."/>
            <person name="Sasaki M."/>
            <person name="Togashi T."/>
            <person name="Oyama M."/>
            <person name="Hata H."/>
            <person name="Watanabe M."/>
            <person name="Komatsu T."/>
            <person name="Mizushima-Sugano J."/>
            <person name="Satoh T."/>
            <person name="Shirai Y."/>
            <person name="Takahashi Y."/>
            <person name="Nakagawa K."/>
            <person name="Okumura K."/>
            <person name="Nagase T."/>
            <person name="Nomura N."/>
            <person name="Kikuchi H."/>
            <person name="Masuho Y."/>
            <person name="Yamashita R."/>
            <person name="Nakai K."/>
            <person name="Yada T."/>
            <person name="Nakamura Y."/>
            <person name="Ohara O."/>
            <person name="Isogai T."/>
            <person name="Sugano S."/>
        </authorList>
    </citation>
    <scope>NUCLEOTIDE SEQUENCE [LARGE SCALE MRNA]</scope>
    <source>
        <tissue>Brain</tissue>
    </source>
</reference>
<reference key="4">
    <citation type="submission" date="2005-09" db="EMBL/GenBank/DDBJ databases">
        <authorList>
            <person name="Mural R.J."/>
            <person name="Istrail S."/>
            <person name="Sutton G.G."/>
            <person name="Florea L."/>
            <person name="Halpern A.L."/>
            <person name="Mobarry C.M."/>
            <person name="Lippert R."/>
            <person name="Walenz B."/>
            <person name="Shatkay H."/>
            <person name="Dew I."/>
            <person name="Miller J.R."/>
            <person name="Flanigan M.J."/>
            <person name="Edwards N.J."/>
            <person name="Bolanos R."/>
            <person name="Fasulo D."/>
            <person name="Halldorsson B.V."/>
            <person name="Hannenhalli S."/>
            <person name="Turner R."/>
            <person name="Yooseph S."/>
            <person name="Lu F."/>
            <person name="Nusskern D.R."/>
            <person name="Shue B.C."/>
            <person name="Zheng X.H."/>
            <person name="Zhong F."/>
            <person name="Delcher A.L."/>
            <person name="Huson D.H."/>
            <person name="Kravitz S.A."/>
            <person name="Mouchard L."/>
            <person name="Reinert K."/>
            <person name="Remington K.A."/>
            <person name="Clark A.G."/>
            <person name="Waterman M.S."/>
            <person name="Eichler E.E."/>
            <person name="Adams M.D."/>
            <person name="Hunkapiller M.W."/>
            <person name="Myers E.W."/>
            <person name="Venter J.C."/>
        </authorList>
    </citation>
    <scope>NUCLEOTIDE SEQUENCE [LARGE SCALE GENOMIC DNA]</scope>
</reference>
<reference key="5">
    <citation type="journal article" date="2004" name="Genome Res.">
        <title>The status, quality, and expansion of the NIH full-length cDNA project: the Mammalian Gene Collection (MGC).</title>
        <authorList>
            <consortium name="The MGC Project Team"/>
        </authorList>
    </citation>
    <scope>NUCLEOTIDE SEQUENCE [LARGE SCALE MRNA]</scope>
    <source>
        <tissue>Colon</tissue>
        <tissue>Eye</tissue>
    </source>
</reference>
<evidence type="ECO:0000255" key="1"/>
<evidence type="ECO:0000305" key="2"/>
<feature type="chain" id="PRO_0000084262" description="Transmembrane protein 187">
    <location>
        <begin position="1"/>
        <end position="261"/>
    </location>
</feature>
<feature type="transmembrane region" description="Helical" evidence="1">
    <location>
        <begin position="8"/>
        <end position="28"/>
    </location>
</feature>
<feature type="transmembrane region" description="Helical" evidence="1">
    <location>
        <begin position="43"/>
        <end position="63"/>
    </location>
</feature>
<feature type="transmembrane region" description="Helical" evidence="1">
    <location>
        <begin position="88"/>
        <end position="108"/>
    </location>
</feature>
<feature type="transmembrane region" description="Helical" evidence="1">
    <location>
        <begin position="113"/>
        <end position="133"/>
    </location>
</feature>
<feature type="transmembrane region" description="Helical" evidence="1">
    <location>
        <begin position="140"/>
        <end position="162"/>
    </location>
</feature>
<feature type="transmembrane region" description="Helical" evidence="1">
    <location>
        <begin position="190"/>
        <end position="210"/>
    </location>
</feature>
<feature type="sequence variant" id="VAR_051431" description="In dbSNP:rs2266890.">
    <original>S</original>
    <variation>L</variation>
    <location>
        <position position="70"/>
    </location>
</feature>
<feature type="sequence variant" id="VAR_051432" description="In dbSNP:rs7350355.">
    <original>M</original>
    <variation>V</variation>
    <location>
        <position position="78"/>
    </location>
</feature>
<feature type="sequence variant" id="VAR_051433" description="In dbSNP:rs36085378.">
    <original>R</original>
    <variation>Q</variation>
    <location>
        <position position="138"/>
    </location>
</feature>
<feature type="sequence conflict" description="In Ref. 2; CAG33328." evidence="2" ref="2">
    <original>Y</original>
    <variation>C</variation>
    <location>
        <position position="37"/>
    </location>
</feature>
<feature type="sequence conflict" description="In Ref. 2; CAG33328." evidence="2" ref="2">
    <original>L</original>
    <variation>F</variation>
    <location>
        <position position="131"/>
    </location>
</feature>
<gene>
    <name type="primary">TMEM187</name>
    <name type="synonym">CXorf12</name>
    <name type="synonym">DXS9878E</name>
    <name type="synonym">ITBA1</name>
</gene>
<comment type="interaction">
    <interactant intactId="EBI-13046724">
        <id>Q14656</id>
    </interactant>
    <interactant intactId="EBI-11343438">
        <id>Q3SXY8</id>
        <label>ARL13B</label>
    </interactant>
    <organismsDiffer>false</organismsDiffer>
    <experiments>3</experiments>
</comment>
<comment type="interaction">
    <interactant intactId="EBI-13046724">
        <id>Q14656</id>
    </interactant>
    <interactant intactId="EBI-7797864">
        <id>P11912</id>
        <label>CD79A</label>
    </interactant>
    <organismsDiffer>false</organismsDiffer>
    <experiments>3</experiments>
</comment>
<comment type="interaction">
    <interactant intactId="EBI-13046724">
        <id>Q14656</id>
    </interactant>
    <interactant intactId="EBI-2130213">
        <id>Q99675</id>
        <label>CGRRF1</label>
    </interactant>
    <organismsDiffer>false</organismsDiffer>
    <experiments>3</experiments>
</comment>
<comment type="interaction">
    <interactant intactId="EBI-13046724">
        <id>Q14656</id>
    </interactant>
    <interactant intactId="EBI-1045797">
        <id>Q8N5K1</id>
        <label>CISD2</label>
    </interactant>
    <organismsDiffer>false</organismsDiffer>
    <experiments>3</experiments>
</comment>
<comment type="interaction">
    <interactant intactId="EBI-13046724">
        <id>Q14656</id>
    </interactant>
    <interactant intactId="EBI-372265">
        <id>P21964</id>
        <label>COMT</label>
    </interactant>
    <organismsDiffer>false</organismsDiffer>
    <experiments>3</experiments>
</comment>
<comment type="interaction">
    <interactant intactId="EBI-13046724">
        <id>Q14656</id>
    </interactant>
    <interactant intactId="EBI-18938272">
        <id>Q96KR6</id>
        <label>FAM210B</label>
    </interactant>
    <organismsDiffer>false</organismsDiffer>
    <experiments>3</experiments>
</comment>
<comment type="interaction">
    <interactant intactId="EBI-13046724">
        <id>Q14656</id>
    </interactant>
    <interactant intactId="EBI-3917143">
        <id>Q5T7V8</id>
        <label>GORAB</label>
    </interactant>
    <organismsDiffer>false</organismsDiffer>
    <experiments>3</experiments>
</comment>
<comment type="interaction">
    <interactant intactId="EBI-13046724">
        <id>Q14656</id>
    </interactant>
    <interactant intactId="EBI-17490413">
        <id>A8MZ59</id>
        <label>LEUTX</label>
    </interactant>
    <organismsDiffer>false</organismsDiffer>
    <experiments>3</experiments>
</comment>
<comment type="interaction">
    <interactant intactId="EBI-13046724">
        <id>Q14656</id>
    </interactant>
    <interactant intactId="EBI-17263240">
        <id>P15941-11</id>
        <label>MUC1</label>
    </interactant>
    <organismsDiffer>false</organismsDiffer>
    <experiments>3</experiments>
</comment>
<comment type="interaction">
    <interactant intactId="EBI-13046724">
        <id>Q14656</id>
    </interactant>
    <interactant intactId="EBI-1050125">
        <id>O15173</id>
        <label>PGRMC2</label>
    </interactant>
    <organismsDiffer>false</organismsDiffer>
    <experiments>3</experiments>
</comment>
<comment type="interaction">
    <interactant intactId="EBI-13046724">
        <id>Q14656</id>
    </interactant>
    <interactant intactId="EBI-3920694">
        <id>Q9NR31</id>
        <label>SAR1A</label>
    </interactant>
    <organismsDiffer>false</organismsDiffer>
    <experiments>3</experiments>
</comment>
<comment type="interaction">
    <interactant intactId="EBI-13046724">
        <id>Q14656</id>
    </interactant>
    <interactant intactId="EBI-10819434">
        <id>Q9NPE6</id>
        <label>SPAG4</label>
    </interactant>
    <organismsDiffer>false</organismsDiffer>
    <experiments>3</experiments>
</comment>
<comment type="interaction">
    <interactant intactId="EBI-13046724">
        <id>Q14656</id>
    </interactant>
    <interactant intactId="EBI-17933167">
        <id>Q9NYW4</id>
        <label>TAS2R5</label>
    </interactant>
    <organismsDiffer>false</organismsDiffer>
    <experiments>3</experiments>
</comment>
<comment type="interaction">
    <interactant intactId="EBI-13046724">
        <id>Q14656</id>
    </interactant>
    <interactant intactId="EBI-8638294">
        <id>Q9NUH8</id>
        <label>TMEM14B</label>
    </interactant>
    <organismsDiffer>false</organismsDiffer>
    <experiments>3</experiments>
</comment>
<comment type="subcellular location">
    <subcellularLocation>
        <location evidence="2">Membrane</location>
        <topology evidence="2">Multi-pass membrane protein</topology>
    </subcellularLocation>
</comment>
<comment type="tissue specificity">
    <text>Ubiquitous.</text>
</comment>